<proteinExistence type="inferred from homology"/>
<sequence>MANVEAQTGELIEKLITVNRVAKVVKGGRIFSFTALTVVGDGKGKVGFGYGKAREVPAAIQKAMEKARRNMVTVQLKGDTLQHPVKGRHSGSQVYMQPASEGTGIIAGGAMRAVLEVSGVHNVLSKAYGSTNPINVVRATIKALNGMKSPEQVAAKRGLRVDEILG</sequence>
<dbReference type="EMBL" id="AE017340">
    <property type="protein sequence ID" value="AAV82731.1"/>
    <property type="molecule type" value="Genomic_DNA"/>
</dbReference>
<dbReference type="RefSeq" id="WP_011235130.1">
    <property type="nucleotide sequence ID" value="NC_006512.1"/>
</dbReference>
<dbReference type="SMR" id="Q5QXW2"/>
<dbReference type="STRING" id="283942.IL1899"/>
<dbReference type="GeneID" id="78252619"/>
<dbReference type="KEGG" id="ilo:IL1899"/>
<dbReference type="eggNOG" id="COG0098">
    <property type="taxonomic scope" value="Bacteria"/>
</dbReference>
<dbReference type="HOGENOM" id="CLU_065898_2_2_6"/>
<dbReference type="OrthoDB" id="9809045at2"/>
<dbReference type="Proteomes" id="UP000001171">
    <property type="component" value="Chromosome"/>
</dbReference>
<dbReference type="GO" id="GO:0015935">
    <property type="term" value="C:small ribosomal subunit"/>
    <property type="evidence" value="ECO:0007669"/>
    <property type="project" value="InterPro"/>
</dbReference>
<dbReference type="GO" id="GO:0019843">
    <property type="term" value="F:rRNA binding"/>
    <property type="evidence" value="ECO:0007669"/>
    <property type="project" value="UniProtKB-UniRule"/>
</dbReference>
<dbReference type="GO" id="GO:0003735">
    <property type="term" value="F:structural constituent of ribosome"/>
    <property type="evidence" value="ECO:0007669"/>
    <property type="project" value="InterPro"/>
</dbReference>
<dbReference type="GO" id="GO:0006412">
    <property type="term" value="P:translation"/>
    <property type="evidence" value="ECO:0007669"/>
    <property type="project" value="UniProtKB-UniRule"/>
</dbReference>
<dbReference type="FunFam" id="3.30.160.20:FF:000001">
    <property type="entry name" value="30S ribosomal protein S5"/>
    <property type="match status" value="1"/>
</dbReference>
<dbReference type="FunFam" id="3.30.230.10:FF:000002">
    <property type="entry name" value="30S ribosomal protein S5"/>
    <property type="match status" value="1"/>
</dbReference>
<dbReference type="Gene3D" id="3.30.160.20">
    <property type="match status" value="1"/>
</dbReference>
<dbReference type="Gene3D" id="3.30.230.10">
    <property type="match status" value="1"/>
</dbReference>
<dbReference type="HAMAP" id="MF_01307_B">
    <property type="entry name" value="Ribosomal_uS5_B"/>
    <property type="match status" value="1"/>
</dbReference>
<dbReference type="InterPro" id="IPR020568">
    <property type="entry name" value="Ribosomal_Su5_D2-typ_SF"/>
</dbReference>
<dbReference type="InterPro" id="IPR000851">
    <property type="entry name" value="Ribosomal_uS5"/>
</dbReference>
<dbReference type="InterPro" id="IPR005712">
    <property type="entry name" value="Ribosomal_uS5_bac-type"/>
</dbReference>
<dbReference type="InterPro" id="IPR005324">
    <property type="entry name" value="Ribosomal_uS5_C"/>
</dbReference>
<dbReference type="InterPro" id="IPR013810">
    <property type="entry name" value="Ribosomal_uS5_N"/>
</dbReference>
<dbReference type="InterPro" id="IPR018192">
    <property type="entry name" value="Ribosomal_uS5_N_CS"/>
</dbReference>
<dbReference type="InterPro" id="IPR014721">
    <property type="entry name" value="Ribsml_uS5_D2-typ_fold_subgr"/>
</dbReference>
<dbReference type="NCBIfam" id="TIGR01021">
    <property type="entry name" value="rpsE_bact"/>
    <property type="match status" value="1"/>
</dbReference>
<dbReference type="PANTHER" id="PTHR48432">
    <property type="entry name" value="S5 DRBM DOMAIN-CONTAINING PROTEIN"/>
    <property type="match status" value="1"/>
</dbReference>
<dbReference type="PANTHER" id="PTHR48432:SF1">
    <property type="entry name" value="S5 DRBM DOMAIN-CONTAINING PROTEIN"/>
    <property type="match status" value="1"/>
</dbReference>
<dbReference type="Pfam" id="PF00333">
    <property type="entry name" value="Ribosomal_S5"/>
    <property type="match status" value="1"/>
</dbReference>
<dbReference type="Pfam" id="PF03719">
    <property type="entry name" value="Ribosomal_S5_C"/>
    <property type="match status" value="1"/>
</dbReference>
<dbReference type="SUPFAM" id="SSF54768">
    <property type="entry name" value="dsRNA-binding domain-like"/>
    <property type="match status" value="1"/>
</dbReference>
<dbReference type="SUPFAM" id="SSF54211">
    <property type="entry name" value="Ribosomal protein S5 domain 2-like"/>
    <property type="match status" value="1"/>
</dbReference>
<dbReference type="PROSITE" id="PS00585">
    <property type="entry name" value="RIBOSOMAL_S5"/>
    <property type="match status" value="1"/>
</dbReference>
<dbReference type="PROSITE" id="PS50881">
    <property type="entry name" value="S5_DSRBD"/>
    <property type="match status" value="1"/>
</dbReference>
<keyword id="KW-1185">Reference proteome</keyword>
<keyword id="KW-0687">Ribonucleoprotein</keyword>
<keyword id="KW-0689">Ribosomal protein</keyword>
<keyword id="KW-0694">RNA-binding</keyword>
<keyword id="KW-0699">rRNA-binding</keyword>
<comment type="function">
    <text evidence="1">With S4 and S12 plays an important role in translational accuracy.</text>
</comment>
<comment type="function">
    <text evidence="1">Located at the back of the 30S subunit body where it stabilizes the conformation of the head with respect to the body.</text>
</comment>
<comment type="subunit">
    <text evidence="1">Part of the 30S ribosomal subunit. Contacts proteins S4 and S8.</text>
</comment>
<comment type="domain">
    <text>The N-terminal domain interacts with the head of the 30S subunit; the C-terminal domain interacts with the body and contacts protein S4. The interaction surface between S4 and S5 is involved in control of translational fidelity.</text>
</comment>
<comment type="similarity">
    <text evidence="1">Belongs to the universal ribosomal protein uS5 family.</text>
</comment>
<organism>
    <name type="scientific">Idiomarina loihiensis (strain ATCC BAA-735 / DSM 15497 / L2-TR)</name>
    <dbReference type="NCBI Taxonomy" id="283942"/>
    <lineage>
        <taxon>Bacteria</taxon>
        <taxon>Pseudomonadati</taxon>
        <taxon>Pseudomonadota</taxon>
        <taxon>Gammaproteobacteria</taxon>
        <taxon>Alteromonadales</taxon>
        <taxon>Idiomarinaceae</taxon>
        <taxon>Idiomarina</taxon>
    </lineage>
</organism>
<reference key="1">
    <citation type="journal article" date="2004" name="Proc. Natl. Acad. Sci. U.S.A.">
        <title>Genome sequence of the deep-sea gamma-proteobacterium Idiomarina loihiensis reveals amino acid fermentation as a source of carbon and energy.</title>
        <authorList>
            <person name="Hou S."/>
            <person name="Saw J.H."/>
            <person name="Lee K.S."/>
            <person name="Freitas T.A."/>
            <person name="Belisle C."/>
            <person name="Kawarabayasi Y."/>
            <person name="Donachie S.P."/>
            <person name="Pikina A."/>
            <person name="Galperin M.Y."/>
            <person name="Koonin E.V."/>
            <person name="Makarova K.S."/>
            <person name="Omelchenko M.V."/>
            <person name="Sorokin A."/>
            <person name="Wolf Y.I."/>
            <person name="Li Q.X."/>
            <person name="Keum Y.S."/>
            <person name="Campbell S."/>
            <person name="Denery J."/>
            <person name="Aizawa S."/>
            <person name="Shibata S."/>
            <person name="Malahoff A."/>
            <person name="Alam M."/>
        </authorList>
    </citation>
    <scope>NUCLEOTIDE SEQUENCE [LARGE SCALE GENOMIC DNA]</scope>
    <source>
        <strain>ATCC BAA-735 / DSM 15497 / L2-TR</strain>
    </source>
</reference>
<protein>
    <recommendedName>
        <fullName evidence="1">Small ribosomal subunit protein uS5</fullName>
    </recommendedName>
    <alternativeName>
        <fullName evidence="2">30S ribosomal protein S5</fullName>
    </alternativeName>
</protein>
<name>RS5_IDILO</name>
<accession>Q5QXW2</accession>
<evidence type="ECO:0000255" key="1">
    <source>
        <dbReference type="HAMAP-Rule" id="MF_01307"/>
    </source>
</evidence>
<evidence type="ECO:0000305" key="2"/>
<gene>
    <name evidence="1" type="primary">rpsE</name>
    <name type="ordered locus">IL1899</name>
</gene>
<feature type="chain" id="PRO_0000131527" description="Small ribosomal subunit protein uS5">
    <location>
        <begin position="1"/>
        <end position="166"/>
    </location>
</feature>
<feature type="domain" description="S5 DRBM" evidence="1">
    <location>
        <begin position="11"/>
        <end position="74"/>
    </location>
</feature>